<dbReference type="EC" id="7.5.2.6" evidence="1"/>
<dbReference type="EMBL" id="CP000026">
    <property type="protein sequence ID" value="AAV77730.1"/>
    <property type="molecule type" value="Genomic_DNA"/>
</dbReference>
<dbReference type="RefSeq" id="WP_000551245.1">
    <property type="nucleotide sequence ID" value="NC_006511.1"/>
</dbReference>
<dbReference type="SMR" id="Q5PGH0"/>
<dbReference type="KEGG" id="spt:SPA1814"/>
<dbReference type="HOGENOM" id="CLU_000604_84_3_6"/>
<dbReference type="Proteomes" id="UP000008185">
    <property type="component" value="Chromosome"/>
</dbReference>
<dbReference type="GO" id="GO:0005886">
    <property type="term" value="C:plasma membrane"/>
    <property type="evidence" value="ECO:0007669"/>
    <property type="project" value="UniProtKB-SubCell"/>
</dbReference>
<dbReference type="GO" id="GO:0015421">
    <property type="term" value="F:ABC-type oligopeptide transporter activity"/>
    <property type="evidence" value="ECO:0007669"/>
    <property type="project" value="TreeGrafter"/>
</dbReference>
<dbReference type="GO" id="GO:0005524">
    <property type="term" value="F:ATP binding"/>
    <property type="evidence" value="ECO:0007669"/>
    <property type="project" value="UniProtKB-KW"/>
</dbReference>
<dbReference type="GO" id="GO:0016887">
    <property type="term" value="F:ATP hydrolysis activity"/>
    <property type="evidence" value="ECO:0007669"/>
    <property type="project" value="InterPro"/>
</dbReference>
<dbReference type="GO" id="GO:0034040">
    <property type="term" value="F:ATPase-coupled lipid transmembrane transporter activity"/>
    <property type="evidence" value="ECO:0007669"/>
    <property type="project" value="InterPro"/>
</dbReference>
<dbReference type="CDD" id="cd18552">
    <property type="entry name" value="ABC_6TM_MsbA_like"/>
    <property type="match status" value="1"/>
</dbReference>
<dbReference type="CDD" id="cd03251">
    <property type="entry name" value="ABCC_MsbA"/>
    <property type="match status" value="1"/>
</dbReference>
<dbReference type="FunFam" id="1.20.1560.10:FF:000008">
    <property type="entry name" value="Lipid A export ATP-binding/permease protein MsbA"/>
    <property type="match status" value="1"/>
</dbReference>
<dbReference type="FunFam" id="3.40.50.300:FF:000140">
    <property type="entry name" value="Lipid A export ATP-binding/permease protein MsbA"/>
    <property type="match status" value="1"/>
</dbReference>
<dbReference type="Gene3D" id="1.20.1560.10">
    <property type="entry name" value="ABC transporter type 1, transmembrane domain"/>
    <property type="match status" value="1"/>
</dbReference>
<dbReference type="Gene3D" id="3.40.50.300">
    <property type="entry name" value="P-loop containing nucleotide triphosphate hydrolases"/>
    <property type="match status" value="1"/>
</dbReference>
<dbReference type="InterPro" id="IPR003593">
    <property type="entry name" value="AAA+_ATPase"/>
</dbReference>
<dbReference type="InterPro" id="IPR011527">
    <property type="entry name" value="ABC1_TM_dom"/>
</dbReference>
<dbReference type="InterPro" id="IPR036640">
    <property type="entry name" value="ABC1_TM_sf"/>
</dbReference>
<dbReference type="InterPro" id="IPR003439">
    <property type="entry name" value="ABC_transporter-like_ATP-bd"/>
</dbReference>
<dbReference type="InterPro" id="IPR017871">
    <property type="entry name" value="ABC_transporter-like_CS"/>
</dbReference>
<dbReference type="InterPro" id="IPR011917">
    <property type="entry name" value="ABC_transpr_lipidA"/>
</dbReference>
<dbReference type="InterPro" id="IPR027417">
    <property type="entry name" value="P-loop_NTPase"/>
</dbReference>
<dbReference type="InterPro" id="IPR039421">
    <property type="entry name" value="Type_1_exporter"/>
</dbReference>
<dbReference type="NCBIfam" id="TIGR02203">
    <property type="entry name" value="MsbA_lipidA"/>
    <property type="match status" value="1"/>
</dbReference>
<dbReference type="NCBIfam" id="NF008381">
    <property type="entry name" value="PRK11176.1"/>
    <property type="match status" value="1"/>
</dbReference>
<dbReference type="PANTHER" id="PTHR43394:SF1">
    <property type="entry name" value="ATP-BINDING CASSETTE SUB-FAMILY B MEMBER 10, MITOCHONDRIAL"/>
    <property type="match status" value="1"/>
</dbReference>
<dbReference type="PANTHER" id="PTHR43394">
    <property type="entry name" value="ATP-DEPENDENT PERMEASE MDL1, MITOCHONDRIAL"/>
    <property type="match status" value="1"/>
</dbReference>
<dbReference type="Pfam" id="PF00664">
    <property type="entry name" value="ABC_membrane"/>
    <property type="match status" value="1"/>
</dbReference>
<dbReference type="Pfam" id="PF00005">
    <property type="entry name" value="ABC_tran"/>
    <property type="match status" value="1"/>
</dbReference>
<dbReference type="SMART" id="SM00382">
    <property type="entry name" value="AAA"/>
    <property type="match status" value="1"/>
</dbReference>
<dbReference type="SUPFAM" id="SSF90123">
    <property type="entry name" value="ABC transporter transmembrane region"/>
    <property type="match status" value="1"/>
</dbReference>
<dbReference type="SUPFAM" id="SSF52540">
    <property type="entry name" value="P-loop containing nucleoside triphosphate hydrolases"/>
    <property type="match status" value="1"/>
</dbReference>
<dbReference type="PROSITE" id="PS50929">
    <property type="entry name" value="ABC_TM1F"/>
    <property type="match status" value="1"/>
</dbReference>
<dbReference type="PROSITE" id="PS00211">
    <property type="entry name" value="ABC_TRANSPORTER_1"/>
    <property type="match status" value="1"/>
</dbReference>
<dbReference type="PROSITE" id="PS50893">
    <property type="entry name" value="ABC_TRANSPORTER_2"/>
    <property type="match status" value="1"/>
</dbReference>
<dbReference type="PROSITE" id="PS51239">
    <property type="entry name" value="MSBA"/>
    <property type="match status" value="1"/>
</dbReference>
<comment type="function">
    <text evidence="1">Involved in lipopolysaccharide (LPS) biosynthesis. Translocates lipid A-core from the inner to the outer leaflet of the inner membrane. Transmembrane domains (TMD) form a pore in the inner membrane and the ATP-binding domain (NBD) is responsible for energy generation.</text>
</comment>
<comment type="catalytic activity">
    <reaction evidence="1">
        <text>ATP + H2O + lipid A-core oligosaccharideSide 1 = ADP + phosphate + lipid A-core oligosaccharideSide 2.</text>
        <dbReference type="EC" id="7.5.2.6"/>
    </reaction>
</comment>
<comment type="subunit">
    <text evidence="1">Homodimer.</text>
</comment>
<comment type="subcellular location">
    <subcellularLocation>
        <location evidence="1">Cell inner membrane</location>
        <topology evidence="1">Multi-pass membrane protein</topology>
    </subcellularLocation>
</comment>
<comment type="domain">
    <text evidence="1">In MsbA the ATP-binding domain (NBD) and the transmembrane domain (TMD) are fused.</text>
</comment>
<comment type="similarity">
    <text evidence="1">Belongs to the ABC transporter superfamily. Lipid exporter (TC 3.A.1.106) family.</text>
</comment>
<accession>Q5PGH0</accession>
<gene>
    <name evidence="1" type="primary">msbA</name>
    <name type="ordered locus">SPA1814</name>
</gene>
<name>MSBA_SALPA</name>
<feature type="chain" id="PRO_0000271651" description="ATP-dependent lipid A-core flippase">
    <location>
        <begin position="1"/>
        <end position="582"/>
    </location>
</feature>
<feature type="transmembrane region" description="Helical" evidence="1">
    <location>
        <begin position="16"/>
        <end position="36"/>
    </location>
</feature>
<feature type="transmembrane region" description="Helical" evidence="1">
    <location>
        <begin position="64"/>
        <end position="84"/>
    </location>
</feature>
<feature type="transmembrane region" description="Helical" evidence="1">
    <location>
        <begin position="153"/>
        <end position="173"/>
    </location>
</feature>
<feature type="transmembrane region" description="Helical" evidence="1">
    <location>
        <begin position="253"/>
        <end position="273"/>
    </location>
</feature>
<feature type="transmembrane region" description="Helical" evidence="1">
    <location>
        <begin position="275"/>
        <end position="295"/>
    </location>
</feature>
<feature type="domain" description="ABC transmembrane type-1" evidence="1">
    <location>
        <begin position="28"/>
        <end position="310"/>
    </location>
</feature>
<feature type="domain" description="ABC transporter" evidence="1">
    <location>
        <begin position="342"/>
        <end position="578"/>
    </location>
</feature>
<feature type="binding site" evidence="1">
    <location>
        <begin position="376"/>
        <end position="383"/>
    </location>
    <ligand>
        <name>ATP</name>
        <dbReference type="ChEBI" id="CHEBI:30616"/>
    </ligand>
</feature>
<sequence length="582" mass="64372">MHNDKDLSTWQTFRRLWPTIAPFKAGLIVAGIALILNAASDTFMLSLLKPLLDDGFGKTDRSVLLWMPLVVIGLMILRGITSYISSYCISWVSGKVVMTMRRRLFGHMMGMPVAFFDKQSTGTLLSRITYDSEQVASSSSGALITVVREGASIIGLFIMMFYYSWQLSIILVVLAPIVSIAIRVVSKRFRSISKNMQNTMGQVTTSAEQMLKGHKEVLIFGGQEVETKRFDKVSNKMRLQGMKMVSASSISDPIIQLIASLALAFVLYAASFPSVMDSLTAGTITVVFSSMIALMRPLKSLTNVNAQFQRGMAACQTLFAILDSEQEKDEGKRVIDRATGDLEFRNVTFTYPGREVPALRNINLKIPAGKTVALVGRSGSGKSTIASLITRFYDIDEGHILMDGHDLREYTLASLRNQVALVSQNVHLFNDTVANNIAYARTEEYSREQIEEAARMAYAMDFINKMDNGLDTIIGENGVLLSGGQRQRIAIARALLRDSPILILDEATSALDTESERAIQAALDELQKNRTSLMIAHRLSTIEQADEIVVVEDGIIVERGTHSELLAQHGVYAQLHKMQFGQ</sequence>
<evidence type="ECO:0000255" key="1">
    <source>
        <dbReference type="HAMAP-Rule" id="MF_01703"/>
    </source>
</evidence>
<proteinExistence type="inferred from homology"/>
<organism>
    <name type="scientific">Salmonella paratyphi A (strain ATCC 9150 / SARB42)</name>
    <dbReference type="NCBI Taxonomy" id="295319"/>
    <lineage>
        <taxon>Bacteria</taxon>
        <taxon>Pseudomonadati</taxon>
        <taxon>Pseudomonadota</taxon>
        <taxon>Gammaproteobacteria</taxon>
        <taxon>Enterobacterales</taxon>
        <taxon>Enterobacteriaceae</taxon>
        <taxon>Salmonella</taxon>
    </lineage>
</organism>
<reference key="1">
    <citation type="journal article" date="2004" name="Nat. Genet.">
        <title>Comparison of genome degradation in Paratyphi A and Typhi, human-restricted serovars of Salmonella enterica that cause typhoid.</title>
        <authorList>
            <person name="McClelland M."/>
            <person name="Sanderson K.E."/>
            <person name="Clifton S.W."/>
            <person name="Latreille P."/>
            <person name="Porwollik S."/>
            <person name="Sabo A."/>
            <person name="Meyer R."/>
            <person name="Bieri T."/>
            <person name="Ozersky P."/>
            <person name="McLellan M."/>
            <person name="Harkins C.R."/>
            <person name="Wang C."/>
            <person name="Nguyen C."/>
            <person name="Berghoff A."/>
            <person name="Elliott G."/>
            <person name="Kohlberg S."/>
            <person name="Strong C."/>
            <person name="Du F."/>
            <person name="Carter J."/>
            <person name="Kremizki C."/>
            <person name="Layman D."/>
            <person name="Leonard S."/>
            <person name="Sun H."/>
            <person name="Fulton L."/>
            <person name="Nash W."/>
            <person name="Miner T."/>
            <person name="Minx P."/>
            <person name="Delehaunty K."/>
            <person name="Fronick C."/>
            <person name="Magrini V."/>
            <person name="Nhan M."/>
            <person name="Warren W."/>
            <person name="Florea L."/>
            <person name="Spieth J."/>
            <person name="Wilson R.K."/>
        </authorList>
    </citation>
    <scope>NUCLEOTIDE SEQUENCE [LARGE SCALE GENOMIC DNA]</scope>
    <source>
        <strain>ATCC 9150 / SARB42</strain>
    </source>
</reference>
<protein>
    <recommendedName>
        <fullName evidence="1">ATP-dependent lipid A-core flippase</fullName>
        <ecNumber evidence="1">7.5.2.6</ecNumber>
    </recommendedName>
    <alternativeName>
        <fullName evidence="1">Lipid A export ATP-binding/permease protein MsbA</fullName>
    </alternativeName>
</protein>
<keyword id="KW-0067">ATP-binding</keyword>
<keyword id="KW-0997">Cell inner membrane</keyword>
<keyword id="KW-1003">Cell membrane</keyword>
<keyword id="KW-0445">Lipid transport</keyword>
<keyword id="KW-0472">Membrane</keyword>
<keyword id="KW-0547">Nucleotide-binding</keyword>
<keyword id="KW-1278">Translocase</keyword>
<keyword id="KW-0812">Transmembrane</keyword>
<keyword id="KW-1133">Transmembrane helix</keyword>
<keyword id="KW-0813">Transport</keyword>